<accession>Q9EP82</accession>
<accession>Q80V01</accession>
<evidence type="ECO:0000250" key="1">
    <source>
        <dbReference type="UniProtKB" id="P57081"/>
    </source>
</evidence>
<evidence type="ECO:0000255" key="2">
    <source>
        <dbReference type="HAMAP-Rule" id="MF_03056"/>
    </source>
</evidence>
<evidence type="ECO:0000256" key="3">
    <source>
        <dbReference type="SAM" id="MobiDB-lite"/>
    </source>
</evidence>
<evidence type="ECO:0000269" key="4">
    <source>
    </source>
</evidence>
<evidence type="ECO:0000269" key="5">
    <source>
    </source>
</evidence>
<evidence type="ECO:0000269" key="6">
    <source>
    </source>
</evidence>
<evidence type="ECO:0000303" key="7">
    <source>
    </source>
</evidence>
<evidence type="ECO:0000305" key="8"/>
<evidence type="ECO:0000312" key="9">
    <source>
        <dbReference type="MGI" id="MGI:1889002"/>
    </source>
</evidence>
<sequence length="413" mass="45756">MASSAGLALCAQTLVVRGGSRFLAFSTTGSDDDCVFTYDCSTAEKKATPEDKGEDGQPADTGSDSILASTFSKSGRYFALTDDSKRLILFRTKPWQCLSVRMVVRRCTALTFTASEDRVLVADKSGDVYSFSVLEPDGCGRLELGHLSMLLDVAVSPDDQFVLTADRDEKIRVSWAAAPHSIESFCLGHTEFVSRILVVPSHPELLLSSSGDGTLRLWEYRSGRQLQCCDLAGLQEPGEQPGHKGLAASRIAFWGQESYVVLLCECVPVVFVFQLDASRQQLVFRQRLTFPHRVWDVVFEEARGLWVLQDCRDAPLVLWRPVGGEWQAAPDGAVSPRLCSHLRESWAMLEGSVGTDDSFRSLYKATFDNMTSYLKKKEERLQQQLKKKRQRSPFPGSPEQTKKACPGQSALSC</sequence>
<dbReference type="EMBL" id="AJ271893">
    <property type="protein sequence ID" value="CAC05585.1"/>
    <property type="molecule type" value="mRNA"/>
</dbReference>
<dbReference type="EMBL" id="AJ271892">
    <property type="protein sequence ID" value="CAC05584.1"/>
    <property type="molecule type" value="mRNA"/>
</dbReference>
<dbReference type="EMBL" id="AK144821">
    <property type="protein sequence ID" value="BAE26082.1"/>
    <property type="molecule type" value="mRNA"/>
</dbReference>
<dbReference type="EMBL" id="AK152271">
    <property type="protein sequence ID" value="BAE31087.1"/>
    <property type="molecule type" value="mRNA"/>
</dbReference>
<dbReference type="EMBL" id="AK153161">
    <property type="protein sequence ID" value="BAE31771.1"/>
    <property type="molecule type" value="mRNA"/>
</dbReference>
<dbReference type="EMBL" id="BC039272">
    <property type="protein sequence ID" value="AAH39272.1"/>
    <property type="molecule type" value="mRNA"/>
</dbReference>
<dbReference type="RefSeq" id="NP_067297.2">
    <property type="nucleotide sequence ID" value="NM_021322.2"/>
</dbReference>
<dbReference type="SMR" id="Q9EP82"/>
<dbReference type="BioGRID" id="208322">
    <property type="interactions" value="18"/>
</dbReference>
<dbReference type="FunCoup" id="Q9EP82">
    <property type="interactions" value="1490"/>
</dbReference>
<dbReference type="IntAct" id="Q9EP82">
    <property type="interactions" value="1"/>
</dbReference>
<dbReference type="MINT" id="Q9EP82"/>
<dbReference type="STRING" id="10090.ENSMUSP00000126061"/>
<dbReference type="GlyGen" id="Q9EP82">
    <property type="glycosylation" value="2 sites, 1 N-linked glycan (1 site), 1 O-linked glycan (1 site)"/>
</dbReference>
<dbReference type="iPTMnet" id="Q9EP82"/>
<dbReference type="PhosphoSitePlus" id="Q9EP82"/>
<dbReference type="jPOST" id="Q9EP82"/>
<dbReference type="PaxDb" id="10090-ENSMUSP00000126061"/>
<dbReference type="ProteomicsDB" id="297892"/>
<dbReference type="Pumba" id="Q9EP82"/>
<dbReference type="GeneID" id="57773"/>
<dbReference type="KEGG" id="mmu:57773"/>
<dbReference type="UCSC" id="uc008bvd.2">
    <property type="organism name" value="mouse"/>
</dbReference>
<dbReference type="AGR" id="MGI:1889002"/>
<dbReference type="CTD" id="10785"/>
<dbReference type="MGI" id="MGI:1889002">
    <property type="gene designation" value="Wdr4"/>
</dbReference>
<dbReference type="eggNOG" id="KOG3914">
    <property type="taxonomic scope" value="Eukaryota"/>
</dbReference>
<dbReference type="InParanoid" id="Q9EP82"/>
<dbReference type="OrthoDB" id="371245at2759"/>
<dbReference type="PhylomeDB" id="Q9EP82"/>
<dbReference type="UniPathway" id="UPA00989"/>
<dbReference type="BioGRID-ORCS" id="57773">
    <property type="hits" value="12 hits in 77 CRISPR screens"/>
</dbReference>
<dbReference type="PRO" id="PR:Q9EP82"/>
<dbReference type="Proteomes" id="UP000000589">
    <property type="component" value="Unplaced"/>
</dbReference>
<dbReference type="RNAct" id="Q9EP82">
    <property type="molecule type" value="protein"/>
</dbReference>
<dbReference type="GO" id="GO:0005694">
    <property type="term" value="C:chromosome"/>
    <property type="evidence" value="ECO:0007669"/>
    <property type="project" value="UniProtKB-SubCell"/>
</dbReference>
<dbReference type="GO" id="GO:0005634">
    <property type="term" value="C:nucleus"/>
    <property type="evidence" value="ECO:0000250"/>
    <property type="project" value="UniProtKB"/>
</dbReference>
<dbReference type="GO" id="GO:0106143">
    <property type="term" value="C:tRNA (m7G46) methyltransferase complex"/>
    <property type="evidence" value="ECO:0000250"/>
    <property type="project" value="UniProtKB"/>
</dbReference>
<dbReference type="GO" id="GO:0008047">
    <property type="term" value="F:enzyme activator activity"/>
    <property type="evidence" value="ECO:0000250"/>
    <property type="project" value="UniProtKB"/>
</dbReference>
<dbReference type="GO" id="GO:0006974">
    <property type="term" value="P:DNA damage response"/>
    <property type="evidence" value="ECO:0007669"/>
    <property type="project" value="UniProtKB-KW"/>
</dbReference>
<dbReference type="GO" id="GO:0106004">
    <property type="term" value="P:tRNA (guanine-N7)-methylation"/>
    <property type="evidence" value="ECO:0000250"/>
    <property type="project" value="UniProtKB"/>
</dbReference>
<dbReference type="GO" id="GO:0006400">
    <property type="term" value="P:tRNA modification"/>
    <property type="evidence" value="ECO:0000250"/>
    <property type="project" value="UniProtKB"/>
</dbReference>
<dbReference type="FunFam" id="2.130.10.10:FF:002322">
    <property type="entry name" value="tRNA (guanine-N(7)-)-methyltransferase non-catalytic subunit WDR4"/>
    <property type="match status" value="1"/>
</dbReference>
<dbReference type="FunFam" id="2.130.10.10:FF:002330">
    <property type="entry name" value="tRNA (guanine-N(7)-)-methyltransferase non-catalytic subunit WDR4"/>
    <property type="match status" value="1"/>
</dbReference>
<dbReference type="Gene3D" id="2.130.10.10">
    <property type="entry name" value="YVTN repeat-like/Quinoprotein amine dehydrogenase"/>
    <property type="match status" value="2"/>
</dbReference>
<dbReference type="HAMAP" id="MF_03056">
    <property type="entry name" value="TRM82"/>
    <property type="match status" value="1"/>
</dbReference>
<dbReference type="InterPro" id="IPR028884">
    <property type="entry name" value="Trm82"/>
</dbReference>
<dbReference type="InterPro" id="IPR015943">
    <property type="entry name" value="WD40/YVTN_repeat-like_dom_sf"/>
</dbReference>
<dbReference type="InterPro" id="IPR036322">
    <property type="entry name" value="WD40_repeat_dom_sf"/>
</dbReference>
<dbReference type="InterPro" id="IPR001680">
    <property type="entry name" value="WD40_rpt"/>
</dbReference>
<dbReference type="PANTHER" id="PTHR16288:SF0">
    <property type="entry name" value="TRNA (GUANINE-N(7)-)-METHYLTRANSFERASE NON-CATALYTIC SUBUNIT WDR4"/>
    <property type="match status" value="1"/>
</dbReference>
<dbReference type="PANTHER" id="PTHR16288">
    <property type="entry name" value="WD40 REPEAT PROTEIN 4"/>
    <property type="match status" value="1"/>
</dbReference>
<dbReference type="Pfam" id="PF00400">
    <property type="entry name" value="WD40"/>
    <property type="match status" value="2"/>
</dbReference>
<dbReference type="SMART" id="SM00320">
    <property type="entry name" value="WD40"/>
    <property type="match status" value="4"/>
</dbReference>
<dbReference type="SUPFAM" id="SSF50978">
    <property type="entry name" value="WD40 repeat-like"/>
    <property type="match status" value="1"/>
</dbReference>
<dbReference type="PROSITE" id="PS50082">
    <property type="entry name" value="WD_REPEATS_2"/>
    <property type="match status" value="1"/>
</dbReference>
<dbReference type="PROSITE" id="PS50294">
    <property type="entry name" value="WD_REPEATS_REGION"/>
    <property type="match status" value="1"/>
</dbReference>
<protein>
    <recommendedName>
        <fullName evidence="2">tRNA (guanine-N(7)-)-methyltransferase non-catalytic subunit WDR4</fullName>
    </recommendedName>
    <alternativeName>
        <fullName evidence="7">Protein Wuho homolog</fullName>
        <shortName evidence="7">mWH</shortName>
    </alternativeName>
    <alternativeName>
        <fullName evidence="2">WD repeat-containing protein 4</fullName>
    </alternativeName>
</protein>
<name>WDR4_MOUSE</name>
<comment type="function">
    <text evidence="2 5 6">Non-catalytic component of the METTL1-WDR4 methyltransferase complex required for the formation of N(7)-methylguanine in a subset of RNA species, such as tRNAs, mRNAs and microRNAs (miRNAs) (PubMed:29983320). In the METTL1-WDR4 methyltransferase complex, WDR4 acts as a scaffold for tRNA-binding (By similarity). Required for the formation of N(7)-methylguanine at position 46 (m7G46) in a large subset of tRNAs that contain the 5'-RAGGU-3' motif within the variable loop (PubMed:29983320). M7G46 interacts with C13-G22 in the D-loop to stabilize tRNA tertiary structure and protect tRNAs from decay (By similarity). Also required for the formation of N(7)-methylguanine at internal sites in a subset of mRNAs (By similarity). Also required for methylation of a specific subset of miRNAs, such as let-7 (By similarity). Acts as a regulator of embryonic stem cell self-renewal and differentiation (PubMed:29983320). Independently of METTL1, also plays a role in genome stability: localizes at the DNA replication site and regulates endonucleolytic activities of FEN1 (PubMed:29574139).</text>
</comment>
<comment type="pathway">
    <text evidence="6">tRNA modification; N(7)-methylguanine-tRNA biosynthesis.</text>
</comment>
<comment type="subunit">
    <text evidence="2">Non-catalytic component of the METTL1-WDR4 complex, composed of METTL1 and WDR4. Interacts with FEN1; the interaction is direct.</text>
</comment>
<comment type="interaction">
    <interactant intactId="EBI-48424564">
        <id>Q9EP82</id>
    </interactant>
    <interactant intactId="EBI-8419367">
        <id>Q3UIA2</id>
        <label>Arhgap17</label>
    </interactant>
    <organismsDiffer>false</organismsDiffer>
    <experiments>2</experiments>
</comment>
<comment type="subcellular location">
    <subcellularLocation>
        <location evidence="2">Nucleus</location>
    </subcellularLocation>
    <subcellularLocation>
        <location evidence="2">Chromosome</location>
    </subcellularLocation>
    <text evidence="2">Localizes at the site of nascent DNA synthesis.</text>
</comment>
<comment type="disruption phenotype">
    <text evidence="4">Embryonic lethality at E9.5-10.5, possibly caused by DNA damage.</text>
</comment>
<comment type="similarity">
    <text evidence="2">Belongs to the WD repeat TRM82 family.</text>
</comment>
<gene>
    <name evidence="9" type="primary">Wdr4</name>
</gene>
<feature type="initiator methionine" description="Removed" evidence="1">
    <location>
        <position position="1"/>
    </location>
</feature>
<feature type="chain" id="PRO_0000051349" description="tRNA (guanine-N(7)-)-methyltransferase non-catalytic subunit WDR4">
    <location>
        <begin position="2"/>
        <end position="413"/>
    </location>
</feature>
<feature type="repeat" description="WD 1">
    <location>
        <begin position="61"/>
        <end position="100"/>
    </location>
</feature>
<feature type="repeat" description="WD 2">
    <location>
        <begin position="102"/>
        <end position="141"/>
    </location>
</feature>
<feature type="repeat" description="WD 3">
    <location>
        <begin position="145"/>
        <end position="185"/>
    </location>
</feature>
<feature type="repeat" description="WD 4">
    <location>
        <begin position="188"/>
        <end position="228"/>
    </location>
</feature>
<feature type="repeat" description="WD 5">
    <location>
        <begin position="289"/>
        <end position="329"/>
    </location>
</feature>
<feature type="region of interest" description="Disordered" evidence="3">
    <location>
        <begin position="380"/>
        <end position="413"/>
    </location>
</feature>
<feature type="modified residue" description="N-acetylalanine" evidence="1">
    <location>
        <position position="2"/>
    </location>
</feature>
<feature type="modified residue" description="Phosphoserine" evidence="1">
    <location>
        <position position="392"/>
    </location>
</feature>
<feature type="modified residue" description="Phosphoserine" evidence="1">
    <location>
        <position position="412"/>
    </location>
</feature>
<feature type="sequence conflict" description="In Ref. 1; CAC05584/CAC05585." evidence="8" ref="1">
    <original>T</original>
    <variation>A</variation>
    <location>
        <position position="28"/>
    </location>
</feature>
<reference key="1">
    <citation type="journal article" date="2000" name="Genomics">
        <title>Isolation and characterization of a human chromosome 21q22.3 gene (WDR4) and its mouse homologue that code for a WD-repeat protein.</title>
        <authorList>
            <person name="Michaud J."/>
            <person name="Kudoh J."/>
            <person name="Berry A."/>
            <person name="Bonne-Tamir B."/>
            <person name="Lalioti M.D."/>
            <person name="Rossier C."/>
            <person name="Shibuya K."/>
            <person name="Kawasaki K."/>
            <person name="Asakawa S."/>
            <person name="Minoshima S."/>
            <person name="Shimizu N."/>
            <person name="Antonarakis S.E."/>
            <person name="Scott H.S."/>
        </authorList>
    </citation>
    <scope>NUCLEOTIDE SEQUENCE [MRNA]</scope>
</reference>
<reference key="2">
    <citation type="journal article" date="2005" name="Science">
        <title>The transcriptional landscape of the mammalian genome.</title>
        <authorList>
            <person name="Carninci P."/>
            <person name="Kasukawa T."/>
            <person name="Katayama S."/>
            <person name="Gough J."/>
            <person name="Frith M.C."/>
            <person name="Maeda N."/>
            <person name="Oyama R."/>
            <person name="Ravasi T."/>
            <person name="Lenhard B."/>
            <person name="Wells C."/>
            <person name="Kodzius R."/>
            <person name="Shimokawa K."/>
            <person name="Bajic V.B."/>
            <person name="Brenner S.E."/>
            <person name="Batalov S."/>
            <person name="Forrest A.R."/>
            <person name="Zavolan M."/>
            <person name="Davis M.J."/>
            <person name="Wilming L.G."/>
            <person name="Aidinis V."/>
            <person name="Allen J.E."/>
            <person name="Ambesi-Impiombato A."/>
            <person name="Apweiler R."/>
            <person name="Aturaliya R.N."/>
            <person name="Bailey T.L."/>
            <person name="Bansal M."/>
            <person name="Baxter L."/>
            <person name="Beisel K.W."/>
            <person name="Bersano T."/>
            <person name="Bono H."/>
            <person name="Chalk A.M."/>
            <person name="Chiu K.P."/>
            <person name="Choudhary V."/>
            <person name="Christoffels A."/>
            <person name="Clutterbuck D.R."/>
            <person name="Crowe M.L."/>
            <person name="Dalla E."/>
            <person name="Dalrymple B.P."/>
            <person name="de Bono B."/>
            <person name="Della Gatta G."/>
            <person name="di Bernardo D."/>
            <person name="Down T."/>
            <person name="Engstrom P."/>
            <person name="Fagiolini M."/>
            <person name="Faulkner G."/>
            <person name="Fletcher C.F."/>
            <person name="Fukushima T."/>
            <person name="Furuno M."/>
            <person name="Futaki S."/>
            <person name="Gariboldi M."/>
            <person name="Georgii-Hemming P."/>
            <person name="Gingeras T.R."/>
            <person name="Gojobori T."/>
            <person name="Green R.E."/>
            <person name="Gustincich S."/>
            <person name="Harbers M."/>
            <person name="Hayashi Y."/>
            <person name="Hensch T.K."/>
            <person name="Hirokawa N."/>
            <person name="Hill D."/>
            <person name="Huminiecki L."/>
            <person name="Iacono M."/>
            <person name="Ikeo K."/>
            <person name="Iwama A."/>
            <person name="Ishikawa T."/>
            <person name="Jakt M."/>
            <person name="Kanapin A."/>
            <person name="Katoh M."/>
            <person name="Kawasawa Y."/>
            <person name="Kelso J."/>
            <person name="Kitamura H."/>
            <person name="Kitano H."/>
            <person name="Kollias G."/>
            <person name="Krishnan S.P."/>
            <person name="Kruger A."/>
            <person name="Kummerfeld S.K."/>
            <person name="Kurochkin I.V."/>
            <person name="Lareau L.F."/>
            <person name="Lazarevic D."/>
            <person name="Lipovich L."/>
            <person name="Liu J."/>
            <person name="Liuni S."/>
            <person name="McWilliam S."/>
            <person name="Madan Babu M."/>
            <person name="Madera M."/>
            <person name="Marchionni L."/>
            <person name="Matsuda H."/>
            <person name="Matsuzawa S."/>
            <person name="Miki H."/>
            <person name="Mignone F."/>
            <person name="Miyake S."/>
            <person name="Morris K."/>
            <person name="Mottagui-Tabar S."/>
            <person name="Mulder N."/>
            <person name="Nakano N."/>
            <person name="Nakauchi H."/>
            <person name="Ng P."/>
            <person name="Nilsson R."/>
            <person name="Nishiguchi S."/>
            <person name="Nishikawa S."/>
            <person name="Nori F."/>
            <person name="Ohara O."/>
            <person name="Okazaki Y."/>
            <person name="Orlando V."/>
            <person name="Pang K.C."/>
            <person name="Pavan W.J."/>
            <person name="Pavesi G."/>
            <person name="Pesole G."/>
            <person name="Petrovsky N."/>
            <person name="Piazza S."/>
            <person name="Reed J."/>
            <person name="Reid J.F."/>
            <person name="Ring B.Z."/>
            <person name="Ringwald M."/>
            <person name="Rost B."/>
            <person name="Ruan Y."/>
            <person name="Salzberg S.L."/>
            <person name="Sandelin A."/>
            <person name="Schneider C."/>
            <person name="Schoenbach C."/>
            <person name="Sekiguchi K."/>
            <person name="Semple C.A."/>
            <person name="Seno S."/>
            <person name="Sessa L."/>
            <person name="Sheng Y."/>
            <person name="Shibata Y."/>
            <person name="Shimada H."/>
            <person name="Shimada K."/>
            <person name="Silva D."/>
            <person name="Sinclair B."/>
            <person name="Sperling S."/>
            <person name="Stupka E."/>
            <person name="Sugiura K."/>
            <person name="Sultana R."/>
            <person name="Takenaka Y."/>
            <person name="Taki K."/>
            <person name="Tammoja K."/>
            <person name="Tan S.L."/>
            <person name="Tang S."/>
            <person name="Taylor M.S."/>
            <person name="Tegner J."/>
            <person name="Teichmann S.A."/>
            <person name="Ueda H.R."/>
            <person name="van Nimwegen E."/>
            <person name="Verardo R."/>
            <person name="Wei C.L."/>
            <person name="Yagi K."/>
            <person name="Yamanishi H."/>
            <person name="Zabarovsky E."/>
            <person name="Zhu S."/>
            <person name="Zimmer A."/>
            <person name="Hide W."/>
            <person name="Bult C."/>
            <person name="Grimmond S.M."/>
            <person name="Teasdale R.D."/>
            <person name="Liu E.T."/>
            <person name="Brusic V."/>
            <person name="Quackenbush J."/>
            <person name="Wahlestedt C."/>
            <person name="Mattick J.S."/>
            <person name="Hume D.A."/>
            <person name="Kai C."/>
            <person name="Sasaki D."/>
            <person name="Tomaru Y."/>
            <person name="Fukuda S."/>
            <person name="Kanamori-Katayama M."/>
            <person name="Suzuki M."/>
            <person name="Aoki J."/>
            <person name="Arakawa T."/>
            <person name="Iida J."/>
            <person name="Imamura K."/>
            <person name="Itoh M."/>
            <person name="Kato T."/>
            <person name="Kawaji H."/>
            <person name="Kawagashira N."/>
            <person name="Kawashima T."/>
            <person name="Kojima M."/>
            <person name="Kondo S."/>
            <person name="Konno H."/>
            <person name="Nakano K."/>
            <person name="Ninomiya N."/>
            <person name="Nishio T."/>
            <person name="Okada M."/>
            <person name="Plessy C."/>
            <person name="Shibata K."/>
            <person name="Shiraki T."/>
            <person name="Suzuki S."/>
            <person name="Tagami M."/>
            <person name="Waki K."/>
            <person name="Watahiki A."/>
            <person name="Okamura-Oho Y."/>
            <person name="Suzuki H."/>
            <person name="Kawai J."/>
            <person name="Hayashizaki Y."/>
        </authorList>
    </citation>
    <scope>NUCLEOTIDE SEQUENCE [LARGE SCALE MRNA]</scope>
    <source>
        <strain>C57BL/6J</strain>
        <tissue>Bone marrow</tissue>
        <tissue>Lung</tissue>
    </source>
</reference>
<reference key="3">
    <citation type="journal article" date="2004" name="Genome Res.">
        <title>The status, quality, and expansion of the NIH full-length cDNA project: the Mammalian Gene Collection (MGC).</title>
        <authorList>
            <consortium name="The MGC Project Team"/>
        </authorList>
    </citation>
    <scope>NUCLEOTIDE SEQUENCE [LARGE SCALE MRNA]</scope>
    <source>
        <strain>FVB/N</strain>
        <tissue>Mammary tumor</tissue>
    </source>
</reference>
<reference key="4">
    <citation type="journal article" date="2010" name="Cell">
        <title>A tissue-specific atlas of mouse protein phosphorylation and expression.</title>
        <authorList>
            <person name="Huttlin E.L."/>
            <person name="Jedrychowski M.P."/>
            <person name="Elias J.E."/>
            <person name="Goswami T."/>
            <person name="Rad R."/>
            <person name="Beausoleil S.A."/>
            <person name="Villen J."/>
            <person name="Haas W."/>
            <person name="Sowa M.E."/>
            <person name="Gygi S.P."/>
        </authorList>
    </citation>
    <scope>IDENTIFICATION BY MASS SPECTROMETRY [LARGE SCALE ANALYSIS]</scope>
    <source>
        <tissue>Spleen</tissue>
    </source>
</reference>
<reference key="5">
    <citation type="journal article" date="2016" name="PLoS Biol.">
        <title>Wuho is a new member in maintaining genome stability through its interaction with flap endonuclease 1.</title>
        <authorList>
            <person name="Cheng I.C."/>
            <person name="Chen B.C."/>
            <person name="Shuai H.H."/>
            <person name="Chien F.C."/>
            <person name="Chen P."/>
            <person name="Hsieh T.S."/>
        </authorList>
    </citation>
    <scope>DISRUPTION PHENOTYPE</scope>
</reference>
<reference key="6">
    <citation type="journal article" date="2018" name="Cell. Signal.">
        <title>Wuho/WDR4 deficiency inhibits cell proliferation and induces apoptosis via DNA damage in mouse embryonic fibroblasts.</title>
        <authorList>
            <person name="Lee C.C."/>
            <person name="Hsieh T.S."/>
        </authorList>
    </citation>
    <scope>FUNCTION</scope>
</reference>
<reference key="7">
    <citation type="journal article" date="2018" name="Mol. Cell">
        <title>Mettl1/Wdr4-mediated m7G tRNA methylome is required for normal mRNA translation and embryonic stem cell self-renewal and differentiation.</title>
        <authorList>
            <person name="Lin S."/>
            <person name="Liu Q."/>
            <person name="Lelyveld V.S."/>
            <person name="Choe J."/>
            <person name="Szostak J.W."/>
            <person name="Gregory R.I."/>
        </authorList>
    </citation>
    <scope>FUNCTION</scope>
    <scope>PATHWAY</scope>
</reference>
<keyword id="KW-0007">Acetylation</keyword>
<keyword id="KW-0158">Chromosome</keyword>
<keyword id="KW-0227">DNA damage</keyword>
<keyword id="KW-0539">Nucleus</keyword>
<keyword id="KW-0597">Phosphoprotein</keyword>
<keyword id="KW-1185">Reference proteome</keyword>
<keyword id="KW-0677">Repeat</keyword>
<keyword id="KW-0819">tRNA processing</keyword>
<keyword id="KW-0853">WD repeat</keyword>
<organism>
    <name type="scientific">Mus musculus</name>
    <name type="common">Mouse</name>
    <dbReference type="NCBI Taxonomy" id="10090"/>
    <lineage>
        <taxon>Eukaryota</taxon>
        <taxon>Metazoa</taxon>
        <taxon>Chordata</taxon>
        <taxon>Craniata</taxon>
        <taxon>Vertebrata</taxon>
        <taxon>Euteleostomi</taxon>
        <taxon>Mammalia</taxon>
        <taxon>Eutheria</taxon>
        <taxon>Euarchontoglires</taxon>
        <taxon>Glires</taxon>
        <taxon>Rodentia</taxon>
        <taxon>Myomorpha</taxon>
        <taxon>Muroidea</taxon>
        <taxon>Muridae</taxon>
        <taxon>Murinae</taxon>
        <taxon>Mus</taxon>
        <taxon>Mus</taxon>
    </lineage>
</organism>
<proteinExistence type="evidence at protein level"/>